<evidence type="ECO:0000250" key="1">
    <source>
        <dbReference type="UniProtKB" id="A0A1L8FDW4"/>
    </source>
</evidence>
<evidence type="ECO:0000250" key="2">
    <source>
        <dbReference type="UniProtKB" id="P35056"/>
    </source>
</evidence>
<evidence type="ECO:0000250" key="3">
    <source>
        <dbReference type="UniProtKB" id="P50542"/>
    </source>
</evidence>
<evidence type="ECO:0000305" key="4"/>
<comment type="function">
    <text evidence="2">Receptor that mediates peroxisomal import of proteins containing a C-terminal PTS1-type tripeptide peroxisomal targeting signal (SKL-type). Binds to cargo proteins containing a PTS1 peroxisomal targeting signal in the cytosol, and translocates them into the peroxisome matrix by passing through the PEX13-PEX14 docking complex along with cargo proteins. PEX5 receptor is then retrotranslocated into the cytosol, leading to release of bound cargo in the peroxisome matrix, and reset for a subsequent peroxisome import cycle.</text>
</comment>
<comment type="subunit">
    <text evidence="2">Interacts (via WxxxF/Y and LVxEF motifs) with PEX14; promoting translocation through the PEX13-PEX14 docking complex.</text>
</comment>
<comment type="subcellular location">
    <subcellularLocation>
        <location evidence="2">Cytoplasm</location>
        <location evidence="2">Cytosol</location>
    </subcellularLocation>
    <subcellularLocation>
        <location evidence="2">Peroxisome matrix</location>
    </subcellularLocation>
    <text evidence="2 3">Cycles between the cytosol and the peroxisome matrix. Following binding to cargo proteins containing a PTS1 peroxisomal targeting signal in the cytosol, recruited to the docking complex, composed of PEX13 and PEX14, leading to translocation into the peroxisome matrix along with cargo proteins. Export and recycling to the cytosol is initiated by binding to the PEX2-PEX10-PEX12 ligase complex via its unstructured N-terminus that inserts into the ligase pore and emerges in the cytosol. Cys-5 of PEX5 is then monoubiquitinated, promoting its extraction from peroxisomal membrane by the PEX1-PEX6 AAA ATPase complex (By similarity). Extraction is accompanied by unfolding of the TPR repeats and release of bound cargo in the peroxisome matrix (By similarity). The TPR repeats refold in the cytosol and ubiquitination is removed by deubiquitinating enzyme UBP15, resetting PEX5 for a subsequent import cycle (By similarity).</text>
</comment>
<comment type="domain">
    <text evidence="1">The TPR repeats mediate interaction with proteins containing a C-terminal PTS1-type tripeptide peroxisomal targeting signal (SKL-type).</text>
</comment>
<comment type="domain">
    <text evidence="1">The WxxxF/Y motifs mediate interaction with PEX14, promoting association with the PEX13-PEX14 docking complex.</text>
</comment>
<comment type="domain">
    <text evidence="1">The amphipathic helix 1 and 2 (AH1 and AH2, respectively) are required for PEX5 retrotranslocation and recycling. AH2 mediates interaction with lumenal side of the PEX2-PEX10-PEX12 ligase complex, while AH1 is required for extraction from peroxisomal membrane by the PEX1-PEX6 AAA ATPase complex.</text>
</comment>
<comment type="PTM">
    <text evidence="2">Monoubiquitinated at Cys-5 by PEX2 during PEX5 passage through the retrotranslocation channel: monoubiquitination acts as a signal for PEX5 extraction and is required for proper export from peroxisomes and recycling. When PEX5 recycling is compromised, polyubiquitinated at Lys-17 by PEX10 during its passage through the retrotranslocation channel, leading to its degradation.</text>
</comment>
<comment type="similarity">
    <text evidence="4">Belongs to the peroxisomal targeting signal receptor family.</text>
</comment>
<protein>
    <recommendedName>
        <fullName>Peroxisomal targeting signal receptor</fullName>
        <shortName>PTS1 receptor</shortName>
        <shortName>PTS1R</shortName>
    </recommendedName>
    <alternativeName>
        <fullName>Peroxin-5</fullName>
    </alternativeName>
</protein>
<proteinExistence type="inferred from homology"/>
<organism>
    <name type="scientific">Eremothecium gossypii (strain ATCC 10895 / CBS 109.51 / FGSC 9923 / NRRL Y-1056)</name>
    <name type="common">Yeast</name>
    <name type="synonym">Ashbya gossypii</name>
    <dbReference type="NCBI Taxonomy" id="284811"/>
    <lineage>
        <taxon>Eukaryota</taxon>
        <taxon>Fungi</taxon>
        <taxon>Dikarya</taxon>
        <taxon>Ascomycota</taxon>
        <taxon>Saccharomycotina</taxon>
        <taxon>Saccharomycetes</taxon>
        <taxon>Saccharomycetales</taxon>
        <taxon>Saccharomycetaceae</taxon>
        <taxon>Eremothecium</taxon>
    </lineage>
</organism>
<name>PEX5_EREGS</name>
<reference key="1">
    <citation type="journal article" date="2004" name="Science">
        <title>The Ashbya gossypii genome as a tool for mapping the ancient Saccharomyces cerevisiae genome.</title>
        <authorList>
            <person name="Dietrich F.S."/>
            <person name="Voegeli S."/>
            <person name="Brachat S."/>
            <person name="Lerch A."/>
            <person name="Gates K."/>
            <person name="Steiner S."/>
            <person name="Mohr C."/>
            <person name="Poehlmann R."/>
            <person name="Luedi P."/>
            <person name="Choi S."/>
            <person name="Wing R.A."/>
            <person name="Flavier A."/>
            <person name="Gaffney T.D."/>
            <person name="Philippsen P."/>
        </authorList>
    </citation>
    <scope>NUCLEOTIDE SEQUENCE [LARGE SCALE GENOMIC DNA]</scope>
    <source>
        <strain>ATCC 10895 / CBS 109.51 / FGSC 9923 / NRRL Y-1056</strain>
    </source>
</reference>
<reference key="2">
    <citation type="journal article" date="2013" name="G3 (Bethesda)">
        <title>Genomes of Ashbya fungi isolated from insects reveal four mating-type loci, numerous translocations, lack of transposons, and distinct gene duplications.</title>
        <authorList>
            <person name="Dietrich F.S."/>
            <person name="Voegeli S."/>
            <person name="Kuo S."/>
            <person name="Philippsen P."/>
        </authorList>
    </citation>
    <scope>GENOME REANNOTATION</scope>
    <scope>SEQUENCE REVISION TO 281 AND 301</scope>
    <source>
        <strain>ATCC 10895 / CBS 109.51 / FGSC 9923 / NRRL Y-1056</strain>
    </source>
</reference>
<gene>
    <name type="primary">PEX5</name>
    <name type="ordered locus">AFR453W</name>
</gene>
<feature type="chain" id="PRO_0000106307" description="Peroxisomal targeting signal receptor">
    <location>
        <begin position="1"/>
        <end position="569"/>
    </location>
</feature>
<feature type="repeat" description="TPR 1">
    <location>
        <begin position="281"/>
        <end position="315"/>
    </location>
</feature>
<feature type="repeat" description="TPR 2">
    <location>
        <begin position="316"/>
        <end position="349"/>
    </location>
</feature>
<feature type="repeat" description="TPR 3">
    <location>
        <begin position="417"/>
        <end position="450"/>
    </location>
</feature>
<feature type="repeat" description="TPR 4">
    <location>
        <begin position="452"/>
        <end position="484"/>
    </location>
</feature>
<feature type="repeat" description="TPR 5">
    <location>
        <begin position="486"/>
        <end position="518"/>
    </location>
</feature>
<feature type="region of interest" description="Amphipathic helix 1 (AH1)" evidence="1">
    <location>
        <begin position="6"/>
        <end position="28"/>
    </location>
</feature>
<feature type="region of interest" description="Amphipathic helix 2 (AH2)" evidence="1">
    <location>
        <begin position="53"/>
        <end position="71"/>
    </location>
</feature>
<feature type="region of interest" description="Amphipathic helix 3 (AH3)" evidence="1">
    <location>
        <begin position="150"/>
        <end position="154"/>
    </location>
</feature>
<feature type="region of interest" description="Amphipathic helix 4 (AH4)" evidence="1">
    <location>
        <begin position="229"/>
        <end position="245"/>
    </location>
</feature>
<feature type="short sequence motif" description="WxxxF/Y motif 1" evidence="1">
    <location>
        <begin position="112"/>
        <end position="116"/>
    </location>
</feature>
<feature type="short sequence motif" description="WxxxF/Y motif 2" evidence="1">
    <location>
        <begin position="181"/>
        <end position="185"/>
    </location>
</feature>
<feature type="cross-link" description="Glycyl cysteine thioester (Cys-Gly) (interchain with G-Cter in ubiquitin)" evidence="2">
    <location>
        <position position="5"/>
    </location>
</feature>
<feature type="cross-link" description="Glycyl lysine isopeptide (Lys-Gly) (interchain with G-Cter in ubiquitin)" evidence="2">
    <location>
        <position position="17"/>
    </location>
</feature>
<dbReference type="EMBL" id="AE016819">
    <property type="protein sequence ID" value="AAS53824.3"/>
    <property type="molecule type" value="Genomic_DNA"/>
</dbReference>
<dbReference type="RefSeq" id="NP_986000.3">
    <property type="nucleotide sequence ID" value="NM_212136.3"/>
</dbReference>
<dbReference type="SMR" id="Q752X0"/>
<dbReference type="FunCoup" id="Q752X0">
    <property type="interactions" value="105"/>
</dbReference>
<dbReference type="STRING" id="284811.Q752X0"/>
<dbReference type="EnsemblFungi" id="AAS53824">
    <property type="protein sequence ID" value="AAS53824"/>
    <property type="gene ID" value="AGOS_AFR453W"/>
</dbReference>
<dbReference type="GeneID" id="4622277"/>
<dbReference type="KEGG" id="ago:AGOS_AFR453W"/>
<dbReference type="eggNOG" id="KOG1125">
    <property type="taxonomic scope" value="Eukaryota"/>
</dbReference>
<dbReference type="HOGENOM" id="CLU_013516_3_0_1"/>
<dbReference type="InParanoid" id="Q752X0"/>
<dbReference type="OMA" id="WEEQFKQ"/>
<dbReference type="OrthoDB" id="10006023at2759"/>
<dbReference type="Proteomes" id="UP000000591">
    <property type="component" value="Chromosome VI"/>
</dbReference>
<dbReference type="GO" id="GO:0005829">
    <property type="term" value="C:cytosol"/>
    <property type="evidence" value="ECO:0000318"/>
    <property type="project" value="GO_Central"/>
</dbReference>
<dbReference type="GO" id="GO:1990429">
    <property type="term" value="C:peroxisomal importomer complex"/>
    <property type="evidence" value="ECO:0007669"/>
    <property type="project" value="EnsemblFungi"/>
</dbReference>
<dbReference type="GO" id="GO:0005782">
    <property type="term" value="C:peroxisomal matrix"/>
    <property type="evidence" value="ECO:0007669"/>
    <property type="project" value="UniProtKB-SubCell"/>
</dbReference>
<dbReference type="GO" id="GO:0005778">
    <property type="term" value="C:peroxisomal membrane"/>
    <property type="evidence" value="ECO:0000318"/>
    <property type="project" value="GO_Central"/>
</dbReference>
<dbReference type="GO" id="GO:0005052">
    <property type="term" value="F:peroxisome matrix targeting signal-1 binding"/>
    <property type="evidence" value="ECO:0000318"/>
    <property type="project" value="GO_Central"/>
</dbReference>
<dbReference type="GO" id="GO:0140597">
    <property type="term" value="F:protein carrier chaperone"/>
    <property type="evidence" value="ECO:0007669"/>
    <property type="project" value="EnsemblFungi"/>
</dbReference>
<dbReference type="GO" id="GO:0030674">
    <property type="term" value="F:protein-macromolecule adaptor activity"/>
    <property type="evidence" value="ECO:0007669"/>
    <property type="project" value="EnsemblFungi"/>
</dbReference>
<dbReference type="GO" id="GO:0016560">
    <property type="term" value="P:protein import into peroxisome matrix, docking"/>
    <property type="evidence" value="ECO:0000318"/>
    <property type="project" value="GO_Central"/>
</dbReference>
<dbReference type="Gene3D" id="1.25.40.10">
    <property type="entry name" value="Tetratricopeptide repeat domain"/>
    <property type="match status" value="1"/>
</dbReference>
<dbReference type="InterPro" id="IPR024111">
    <property type="entry name" value="PEX5/PEX5L"/>
</dbReference>
<dbReference type="InterPro" id="IPR011990">
    <property type="entry name" value="TPR-like_helical_dom_sf"/>
</dbReference>
<dbReference type="InterPro" id="IPR019734">
    <property type="entry name" value="TPR_rpt"/>
</dbReference>
<dbReference type="PANTHER" id="PTHR10130:SF0">
    <property type="entry name" value="GH08708P"/>
    <property type="match status" value="1"/>
</dbReference>
<dbReference type="PANTHER" id="PTHR10130">
    <property type="entry name" value="PEROXISOMAL TARGETING SIGNAL 1 RECEPTOR PEX5"/>
    <property type="match status" value="1"/>
</dbReference>
<dbReference type="Pfam" id="PF13432">
    <property type="entry name" value="TPR_16"/>
    <property type="match status" value="2"/>
</dbReference>
<dbReference type="SMART" id="SM00028">
    <property type="entry name" value="TPR"/>
    <property type="match status" value="4"/>
</dbReference>
<dbReference type="SUPFAM" id="SSF48452">
    <property type="entry name" value="TPR-like"/>
    <property type="match status" value="1"/>
</dbReference>
<dbReference type="PROSITE" id="PS50005">
    <property type="entry name" value="TPR"/>
    <property type="match status" value="5"/>
</dbReference>
<dbReference type="PROSITE" id="PS50293">
    <property type="entry name" value="TPR_REGION"/>
    <property type="match status" value="2"/>
</dbReference>
<sequence>MSADCSVGANPLAQLNKRVQQDRTLQHGSHVNIHQGAEAQAFKSGPQVSESNKFQMEQFMAGKASSGGNMFMGAGMSSGPLALGGSSGLRMSPGPAKELGARLGGAPMTGSWSQEFNQQVGSPVQSSSAVSSVSMSSASSSVARAGAYRPMNMMRPVMGLQGARAVGVERHAGPAINDAAWEQQFQELEKQVEKTLNISDPVEQQQVLEELSAEAREADYAGGDYEKRFQQIWNDIHDQTDDLDSRTELGGGSGDYQRVFSTRPAQTAQYAFETDNQYLHNTDAYKIGCILMENGAKLSEAALAFEAAVQQDPGHVDAWLRLGLVQTQNEKELSGINALEQCLKADPHNLMALMTVAISYINEGYDVSAFTMLGRWLETKYPAFVEEPLDRVDRYNLSRLIIEQYLRVANALPEVDPDVQLGLGILFYANEDFDKTIDCFRAALAVRPDDECMWNRLGASLANSNRSEEAIQAYHRAIQLKPTFVRARYNLAVSSMNIGCYREAAEHLLTALSMHEVEGVAMAPGSGNVPSSNILETLKRAFIAMDRRDLLERVVPNMDLQQFRGEFNF</sequence>
<keyword id="KW-0963">Cytoplasm</keyword>
<keyword id="KW-1017">Isopeptide bond</keyword>
<keyword id="KW-0576">Peroxisome</keyword>
<keyword id="KW-0653">Protein transport</keyword>
<keyword id="KW-1185">Reference proteome</keyword>
<keyword id="KW-0677">Repeat</keyword>
<keyword id="KW-0882">Thioester bond</keyword>
<keyword id="KW-0802">TPR repeat</keyword>
<keyword id="KW-0811">Translocation</keyword>
<keyword id="KW-0813">Transport</keyword>
<keyword id="KW-0832">Ubl conjugation</keyword>
<accession>Q752X0</accession>